<reference key="1">
    <citation type="submission" date="2002-12" db="EMBL/GenBank/DDBJ databases">
        <title>Complete genome sequence of Vibrio vulnificus CMCP6.</title>
        <authorList>
            <person name="Rhee J.H."/>
            <person name="Kim S.Y."/>
            <person name="Chung S.S."/>
            <person name="Kim J.J."/>
            <person name="Moon Y.H."/>
            <person name="Jeong H."/>
            <person name="Choy H.E."/>
        </authorList>
    </citation>
    <scope>NUCLEOTIDE SEQUENCE [LARGE SCALE GENOMIC DNA]</scope>
    <source>
        <strain>CMCP6</strain>
    </source>
</reference>
<comment type="function">
    <text evidence="1">Catalyzes the oxidation of 3-carboxy-2-hydroxy-4-methylpentanoate (3-isopropylmalate) to 3-carboxy-4-methyl-2-oxopentanoate. The product decarboxylates to 4-methyl-2 oxopentanoate.</text>
</comment>
<comment type="catalytic activity">
    <reaction evidence="1">
        <text>(2R,3S)-3-isopropylmalate + NAD(+) = 4-methyl-2-oxopentanoate + CO2 + NADH</text>
        <dbReference type="Rhea" id="RHEA:32271"/>
        <dbReference type="ChEBI" id="CHEBI:16526"/>
        <dbReference type="ChEBI" id="CHEBI:17865"/>
        <dbReference type="ChEBI" id="CHEBI:35121"/>
        <dbReference type="ChEBI" id="CHEBI:57540"/>
        <dbReference type="ChEBI" id="CHEBI:57945"/>
        <dbReference type="EC" id="1.1.1.85"/>
    </reaction>
</comment>
<comment type="cofactor">
    <cofactor evidence="1">
        <name>Mg(2+)</name>
        <dbReference type="ChEBI" id="CHEBI:18420"/>
    </cofactor>
    <cofactor evidence="1">
        <name>Mn(2+)</name>
        <dbReference type="ChEBI" id="CHEBI:29035"/>
    </cofactor>
    <text evidence="1">Binds 1 Mg(2+) or Mn(2+) ion per subunit.</text>
</comment>
<comment type="pathway">
    <text evidence="1">Amino-acid biosynthesis; L-leucine biosynthesis; L-leucine from 3-methyl-2-oxobutanoate: step 3/4.</text>
</comment>
<comment type="subunit">
    <text evidence="1">Homodimer.</text>
</comment>
<comment type="subcellular location">
    <subcellularLocation>
        <location evidence="1">Cytoplasm</location>
    </subcellularLocation>
</comment>
<comment type="similarity">
    <text evidence="1">Belongs to the isocitrate and isopropylmalate dehydrogenases family. LeuB type 1 subfamily.</text>
</comment>
<sequence>MTDKTYKIAVLPGDGIGPEVMAQAHKVLDAIEKKHAIHFEREEHDVGGIAIDNHGCPLPQSTVTACEESDAVLFGSVGGPKWEHLPPNDQPERGALLPLRKHFQLFCNLRPAQIHSGLEAFSPLRADISGRGFDIVVVRELTGGIYFGQPKGREGEGANEKAYDTEIYHRFEIERIAKIAFESARLRRKKVCSIDKANVLQSSILWREVVEELAKDYPDVELSHMYIDNATMQLIKDPAQFDVMLCSNIFGDIISDECAMITGSMGMLPSASLNESKFGLYEPAGGSAPDIAGKNIANPVAQILSAALMLRYSLGEEAAAQDIENAVSQALAAGELTADLAGDKPALSTAEMGDKIAQYILNS</sequence>
<protein>
    <recommendedName>
        <fullName evidence="1">3-isopropylmalate dehydrogenase</fullName>
        <ecNumber evidence="1">1.1.1.85</ecNumber>
    </recommendedName>
    <alternativeName>
        <fullName evidence="1">3-IPM-DH</fullName>
    </alternativeName>
    <alternativeName>
        <fullName evidence="1">Beta-IPM dehydrogenase</fullName>
        <shortName evidence="1">IMDH</shortName>
    </alternativeName>
</protein>
<gene>
    <name evidence="1" type="primary">leuB</name>
    <name type="ordered locus">VV1_0655</name>
</gene>
<organism>
    <name type="scientific">Vibrio vulnificus (strain CMCP6)</name>
    <dbReference type="NCBI Taxonomy" id="216895"/>
    <lineage>
        <taxon>Bacteria</taxon>
        <taxon>Pseudomonadati</taxon>
        <taxon>Pseudomonadota</taxon>
        <taxon>Gammaproteobacteria</taxon>
        <taxon>Vibrionales</taxon>
        <taxon>Vibrionaceae</taxon>
        <taxon>Vibrio</taxon>
    </lineage>
</organism>
<keyword id="KW-0028">Amino-acid biosynthesis</keyword>
<keyword id="KW-0100">Branched-chain amino acid biosynthesis</keyword>
<keyword id="KW-0963">Cytoplasm</keyword>
<keyword id="KW-0432">Leucine biosynthesis</keyword>
<keyword id="KW-0460">Magnesium</keyword>
<keyword id="KW-0464">Manganese</keyword>
<keyword id="KW-0479">Metal-binding</keyword>
<keyword id="KW-0520">NAD</keyword>
<keyword id="KW-0560">Oxidoreductase</keyword>
<accession>Q8DEE0</accession>
<feature type="chain" id="PRO_0000083781" description="3-isopropylmalate dehydrogenase">
    <location>
        <begin position="1"/>
        <end position="363"/>
    </location>
</feature>
<feature type="binding site" evidence="1">
    <location>
        <begin position="79"/>
        <end position="92"/>
    </location>
    <ligand>
        <name>NAD(+)</name>
        <dbReference type="ChEBI" id="CHEBI:57540"/>
    </ligand>
</feature>
<feature type="binding site" evidence="1">
    <location>
        <position position="100"/>
    </location>
    <ligand>
        <name>substrate</name>
    </ligand>
</feature>
<feature type="binding site" evidence="1">
    <location>
        <position position="110"/>
    </location>
    <ligand>
        <name>substrate</name>
    </ligand>
</feature>
<feature type="binding site" evidence="1">
    <location>
        <position position="139"/>
    </location>
    <ligand>
        <name>substrate</name>
    </ligand>
</feature>
<feature type="binding site" evidence="1">
    <location>
        <position position="228"/>
    </location>
    <ligand>
        <name>Mg(2+)</name>
        <dbReference type="ChEBI" id="CHEBI:18420"/>
    </ligand>
</feature>
<feature type="binding site" evidence="1">
    <location>
        <position position="228"/>
    </location>
    <ligand>
        <name>substrate</name>
    </ligand>
</feature>
<feature type="binding site" evidence="1">
    <location>
        <position position="252"/>
    </location>
    <ligand>
        <name>Mg(2+)</name>
        <dbReference type="ChEBI" id="CHEBI:18420"/>
    </ligand>
</feature>
<feature type="binding site" evidence="1">
    <location>
        <position position="256"/>
    </location>
    <ligand>
        <name>Mg(2+)</name>
        <dbReference type="ChEBI" id="CHEBI:18420"/>
    </ligand>
</feature>
<feature type="binding site" evidence="1">
    <location>
        <begin position="286"/>
        <end position="298"/>
    </location>
    <ligand>
        <name>NAD(+)</name>
        <dbReference type="ChEBI" id="CHEBI:57540"/>
    </ligand>
</feature>
<feature type="site" description="Important for catalysis" evidence="1">
    <location>
        <position position="146"/>
    </location>
</feature>
<feature type="site" description="Important for catalysis" evidence="1">
    <location>
        <position position="196"/>
    </location>
</feature>
<evidence type="ECO:0000255" key="1">
    <source>
        <dbReference type="HAMAP-Rule" id="MF_01033"/>
    </source>
</evidence>
<proteinExistence type="inferred from homology"/>
<dbReference type="EC" id="1.1.1.85" evidence="1"/>
<dbReference type="EMBL" id="AE016795">
    <property type="protein sequence ID" value="AAO09167.1"/>
    <property type="molecule type" value="Genomic_DNA"/>
</dbReference>
<dbReference type="RefSeq" id="WP_011078734.1">
    <property type="nucleotide sequence ID" value="NC_004459.3"/>
</dbReference>
<dbReference type="SMR" id="Q8DEE0"/>
<dbReference type="KEGG" id="vvu:VV1_0655"/>
<dbReference type="HOGENOM" id="CLU_031953_0_3_6"/>
<dbReference type="UniPathway" id="UPA00048">
    <property type="reaction ID" value="UER00072"/>
</dbReference>
<dbReference type="Proteomes" id="UP000002275">
    <property type="component" value="Chromosome 1"/>
</dbReference>
<dbReference type="GO" id="GO:0005829">
    <property type="term" value="C:cytosol"/>
    <property type="evidence" value="ECO:0007669"/>
    <property type="project" value="TreeGrafter"/>
</dbReference>
<dbReference type="GO" id="GO:0003862">
    <property type="term" value="F:3-isopropylmalate dehydrogenase activity"/>
    <property type="evidence" value="ECO:0007669"/>
    <property type="project" value="UniProtKB-UniRule"/>
</dbReference>
<dbReference type="GO" id="GO:0000287">
    <property type="term" value="F:magnesium ion binding"/>
    <property type="evidence" value="ECO:0007669"/>
    <property type="project" value="InterPro"/>
</dbReference>
<dbReference type="GO" id="GO:0051287">
    <property type="term" value="F:NAD binding"/>
    <property type="evidence" value="ECO:0007669"/>
    <property type="project" value="InterPro"/>
</dbReference>
<dbReference type="GO" id="GO:0009098">
    <property type="term" value="P:L-leucine biosynthetic process"/>
    <property type="evidence" value="ECO:0007669"/>
    <property type="project" value="UniProtKB-UniRule"/>
</dbReference>
<dbReference type="FunFam" id="3.40.718.10:FF:000004">
    <property type="entry name" value="3-isopropylmalate dehydrogenase"/>
    <property type="match status" value="1"/>
</dbReference>
<dbReference type="Gene3D" id="3.40.718.10">
    <property type="entry name" value="Isopropylmalate Dehydrogenase"/>
    <property type="match status" value="1"/>
</dbReference>
<dbReference type="HAMAP" id="MF_01033">
    <property type="entry name" value="LeuB_type1"/>
    <property type="match status" value="1"/>
</dbReference>
<dbReference type="InterPro" id="IPR019818">
    <property type="entry name" value="IsoCit/isopropylmalate_DH_CS"/>
</dbReference>
<dbReference type="InterPro" id="IPR024084">
    <property type="entry name" value="IsoPropMal-DH-like_dom"/>
</dbReference>
<dbReference type="InterPro" id="IPR004429">
    <property type="entry name" value="Isopropylmalate_DH"/>
</dbReference>
<dbReference type="NCBIfam" id="TIGR00169">
    <property type="entry name" value="leuB"/>
    <property type="match status" value="1"/>
</dbReference>
<dbReference type="PANTHER" id="PTHR42979">
    <property type="entry name" value="3-ISOPROPYLMALATE DEHYDROGENASE"/>
    <property type="match status" value="1"/>
</dbReference>
<dbReference type="PANTHER" id="PTHR42979:SF1">
    <property type="entry name" value="3-ISOPROPYLMALATE DEHYDROGENASE"/>
    <property type="match status" value="1"/>
</dbReference>
<dbReference type="Pfam" id="PF00180">
    <property type="entry name" value="Iso_dh"/>
    <property type="match status" value="1"/>
</dbReference>
<dbReference type="SMART" id="SM01329">
    <property type="entry name" value="Iso_dh"/>
    <property type="match status" value="1"/>
</dbReference>
<dbReference type="SUPFAM" id="SSF53659">
    <property type="entry name" value="Isocitrate/Isopropylmalate dehydrogenase-like"/>
    <property type="match status" value="1"/>
</dbReference>
<dbReference type="PROSITE" id="PS00470">
    <property type="entry name" value="IDH_IMDH"/>
    <property type="match status" value="1"/>
</dbReference>
<name>LEU3_VIBVU</name>